<protein>
    <recommendedName>
        <fullName evidence="1">Pup--protein ligase</fullName>
        <ecNumber evidence="1">6.3.1.19</ecNumber>
    </recommendedName>
    <alternativeName>
        <fullName evidence="1">Proteasome accessory factor A</fullName>
    </alternativeName>
    <alternativeName>
        <fullName evidence="1">Pup-conjugating enzyme</fullName>
    </alternativeName>
</protein>
<dbReference type="EC" id="6.3.1.19" evidence="1"/>
<dbReference type="EMBL" id="CP001601">
    <property type="protein sequence ID" value="ACP32857.1"/>
    <property type="molecule type" value="Genomic_DNA"/>
</dbReference>
<dbReference type="SMR" id="C3PGA3"/>
<dbReference type="STRING" id="548476.cauri_1264"/>
<dbReference type="MEROPS" id="U72.001"/>
<dbReference type="KEGG" id="car:cauri_1264"/>
<dbReference type="eggNOG" id="COG0638">
    <property type="taxonomic scope" value="Bacteria"/>
</dbReference>
<dbReference type="HOGENOM" id="CLU_040524_0_1_11"/>
<dbReference type="UniPathway" id="UPA00997"/>
<dbReference type="UniPathway" id="UPA00998"/>
<dbReference type="Proteomes" id="UP000002077">
    <property type="component" value="Chromosome"/>
</dbReference>
<dbReference type="GO" id="GO:0005524">
    <property type="term" value="F:ATP binding"/>
    <property type="evidence" value="ECO:0007669"/>
    <property type="project" value="UniProtKB-UniRule"/>
</dbReference>
<dbReference type="GO" id="GO:0016879">
    <property type="term" value="F:ligase activity, forming carbon-nitrogen bonds"/>
    <property type="evidence" value="ECO:0007669"/>
    <property type="project" value="InterPro"/>
</dbReference>
<dbReference type="GO" id="GO:0000287">
    <property type="term" value="F:magnesium ion binding"/>
    <property type="evidence" value="ECO:0007669"/>
    <property type="project" value="UniProtKB-UniRule"/>
</dbReference>
<dbReference type="GO" id="GO:0019787">
    <property type="term" value="F:ubiquitin-like protein transferase activity"/>
    <property type="evidence" value="ECO:0007669"/>
    <property type="project" value="UniProtKB-UniRule"/>
</dbReference>
<dbReference type="GO" id="GO:0019941">
    <property type="term" value="P:modification-dependent protein catabolic process"/>
    <property type="evidence" value="ECO:0007669"/>
    <property type="project" value="UniProtKB-UniRule"/>
</dbReference>
<dbReference type="GO" id="GO:0010498">
    <property type="term" value="P:proteasomal protein catabolic process"/>
    <property type="evidence" value="ECO:0007669"/>
    <property type="project" value="UniProtKB-UniRule"/>
</dbReference>
<dbReference type="GO" id="GO:0070490">
    <property type="term" value="P:protein pupylation"/>
    <property type="evidence" value="ECO:0007669"/>
    <property type="project" value="UniProtKB-UniRule"/>
</dbReference>
<dbReference type="HAMAP" id="MF_02111">
    <property type="entry name" value="Pup_ligase"/>
    <property type="match status" value="1"/>
</dbReference>
<dbReference type="InterPro" id="IPR022279">
    <property type="entry name" value="Pup_ligase"/>
</dbReference>
<dbReference type="InterPro" id="IPR004347">
    <property type="entry name" value="Pup_ligase/deamidase"/>
</dbReference>
<dbReference type="NCBIfam" id="TIGR03686">
    <property type="entry name" value="pupylate_PafA"/>
    <property type="match status" value="1"/>
</dbReference>
<dbReference type="PANTHER" id="PTHR42307">
    <property type="entry name" value="PUP DEAMIDASE/DEPUPYLASE"/>
    <property type="match status" value="1"/>
</dbReference>
<dbReference type="PANTHER" id="PTHR42307:SF3">
    <property type="entry name" value="PUP--PROTEIN LIGASE"/>
    <property type="match status" value="1"/>
</dbReference>
<dbReference type="Pfam" id="PF03136">
    <property type="entry name" value="Pup_ligase"/>
    <property type="match status" value="1"/>
</dbReference>
<dbReference type="PIRSF" id="PIRSF018077">
    <property type="entry name" value="UCP018077"/>
    <property type="match status" value="1"/>
</dbReference>
<keyword id="KW-0067">ATP-binding</keyword>
<keyword id="KW-0436">Ligase</keyword>
<keyword id="KW-0460">Magnesium</keyword>
<keyword id="KW-0479">Metal-binding</keyword>
<keyword id="KW-0547">Nucleotide-binding</keyword>
<keyword id="KW-1185">Reference proteome</keyword>
<keyword id="KW-0833">Ubl conjugation pathway</keyword>
<reference key="1">
    <citation type="journal article" date="2010" name="BMC Genomics">
        <title>Complete genome sequence and lifestyle of black-pigmented Corynebacterium aurimucosum ATCC 700975 (formerly C. nigricans CN-1) isolated from a vaginal swab of a woman with spontaneous abortion.</title>
        <authorList>
            <person name="Trost E."/>
            <person name="Gotker S."/>
            <person name="Schneider J."/>
            <person name="Schneiker-Bekel S."/>
            <person name="Szczepanowski R."/>
            <person name="Tilker A."/>
            <person name="Viehoever P."/>
            <person name="Arnold W."/>
            <person name="Bekel T."/>
            <person name="Blom J."/>
            <person name="Gartemann K.H."/>
            <person name="Linke B."/>
            <person name="Goesmann A."/>
            <person name="Puhler A."/>
            <person name="Shukla S.K."/>
            <person name="Tauch A."/>
        </authorList>
    </citation>
    <scope>NUCLEOTIDE SEQUENCE [LARGE SCALE GENOMIC DNA]</scope>
    <source>
        <strain>ATCC 700975 / DSM 44827 / CIP 107346 / CN-1</strain>
    </source>
</reference>
<accession>C3PGA3</accession>
<name>PAFA_CORA7</name>
<proteinExistence type="inferred from homology"/>
<sequence>MEQPSDSAPVYARRIMGIETEYGITASASNGQRVMSPDEIARVLFRPIVSKYSSSNIFSPNASRLYLDVGSHPEIATAECDSLSQLIAYERAGDAMVNRMAVQAEETLADEGEKRAVYLFKNNVDSAGNSYGCHENYLIGRHVVLKDLGKALLPFMITRQLICGVGMIRPAKGDDPACFVLSQRADQVWEGVSSATTRSRPIINTRDEPHGDSKRFRRMHVIVGDSNMAEPTMALKVGSTLLMLEMLEAGFEVPNLSVLEPIQHIRAIALDPTGRTELPLEGGGSTTALAVQQELCTAAERWLEHREEAGTPTTELARVVDLWKRTLQAIDTQDFSSVDREIDWVIKRSLLNRYRDRLGGDWAHPKLAQIDLTYHDIRPGRGLYSVLEQRGMVERWIDDAAIDAAIDTAPQTTRAKLRGEFLAVARELDAAVTVDWTRMKVNRPEPMTEEFSDPFVSEDPRLDGLLDYMRSHPGS</sequence>
<gene>
    <name evidence="1" type="primary">pafA</name>
    <name type="ordered locus">cauri_1264</name>
</gene>
<comment type="function">
    <text evidence="1">Catalyzes the covalent attachment of the prokaryotic ubiquitin-like protein modifier Pup to the proteasomal substrate proteins, thereby targeting them for proteasomal degradation. This tagging system is termed pupylation. The ligation reaction involves the side-chain carboxylate of the C-terminal glutamate of Pup and the side-chain amino group of a substrate lysine.</text>
</comment>
<comment type="catalytic activity">
    <reaction evidence="1">
        <text>ATP + [prokaryotic ubiquitin-like protein]-L-glutamate + [protein]-L-lysine = ADP + phosphate + N(6)-([prokaryotic ubiquitin-like protein]-gamma-L-glutamyl)-[protein]-L-lysine.</text>
        <dbReference type="EC" id="6.3.1.19"/>
    </reaction>
</comment>
<comment type="pathway">
    <text evidence="1">Protein degradation; proteasomal Pup-dependent pathway.</text>
</comment>
<comment type="pathway">
    <text evidence="1">Protein modification; protein pupylation.</text>
</comment>
<comment type="miscellaneous">
    <text evidence="1">The reaction mechanism probably proceeds via the activation of Pup by phosphorylation of its C-terminal glutamate, which is then subject to nucleophilic attack by the substrate lysine, resulting in an isopeptide bond and the release of phosphate as a good leaving group.</text>
</comment>
<comment type="similarity">
    <text evidence="1">Belongs to the Pup ligase/Pup deamidase family. Pup-conjugating enzyme subfamily.</text>
</comment>
<evidence type="ECO:0000255" key="1">
    <source>
        <dbReference type="HAMAP-Rule" id="MF_02111"/>
    </source>
</evidence>
<organism>
    <name type="scientific">Corynebacterium aurimucosum (strain ATCC 700975 / DSM 44827 / CIP 107346 / CN-1)</name>
    <name type="common">Corynebacterium nigricans</name>
    <dbReference type="NCBI Taxonomy" id="548476"/>
    <lineage>
        <taxon>Bacteria</taxon>
        <taxon>Bacillati</taxon>
        <taxon>Actinomycetota</taxon>
        <taxon>Actinomycetes</taxon>
        <taxon>Mycobacteriales</taxon>
        <taxon>Corynebacteriaceae</taxon>
        <taxon>Corynebacterium</taxon>
    </lineage>
</organism>
<feature type="chain" id="PRO_0000395905" description="Pup--protein ligase">
    <location>
        <begin position="1"/>
        <end position="475"/>
    </location>
</feature>
<feature type="active site" description="Proton acceptor" evidence="1">
    <location>
        <position position="68"/>
    </location>
</feature>
<feature type="binding site" evidence="1">
    <location>
        <position position="19"/>
    </location>
    <ligand>
        <name>Mg(2+)</name>
        <dbReference type="ChEBI" id="CHEBI:18420"/>
    </ligand>
</feature>
<feature type="binding site" evidence="1">
    <location>
        <position position="64"/>
    </location>
    <ligand>
        <name>ATP</name>
        <dbReference type="ChEBI" id="CHEBI:30616"/>
    </ligand>
</feature>
<feature type="binding site" evidence="1">
    <location>
        <position position="66"/>
    </location>
    <ligand>
        <name>Mg(2+)</name>
        <dbReference type="ChEBI" id="CHEBI:18420"/>
    </ligand>
</feature>
<feature type="binding site" evidence="1">
    <location>
        <position position="74"/>
    </location>
    <ligand>
        <name>Mg(2+)</name>
        <dbReference type="ChEBI" id="CHEBI:18420"/>
    </ligand>
</feature>
<feature type="binding site" evidence="1">
    <location>
        <position position="77"/>
    </location>
    <ligand>
        <name>ATP</name>
        <dbReference type="ChEBI" id="CHEBI:30616"/>
    </ligand>
</feature>
<feature type="binding site" evidence="1">
    <location>
        <position position="436"/>
    </location>
    <ligand>
        <name>ATP</name>
        <dbReference type="ChEBI" id="CHEBI:30616"/>
    </ligand>
</feature>